<proteinExistence type="evidence at protein level"/>
<name>PA1_SOLIN</name>
<reference key="1">
    <citation type="journal article" date="2004" name="J. Allergy Clin. Immunol.">
        <title>The sequence of Sol i 1, the cross-reactive allergen of imported fire ant venom.</title>
        <authorList>
            <person name="Schmidt M."/>
            <person name="Sakell R.H."/>
            <person name="Hoffman D.R."/>
        </authorList>
    </citation>
    <scope>NUCLEOTIDE SEQUENCE [MRNA]</scope>
    <source>
        <tissue>Venom gland</tissue>
    </source>
</reference>
<reference key="2">
    <citation type="journal article" date="1995" name="Allergy">
        <title>Fire ant venom allergy.</title>
        <authorList>
            <person name="Hoffman D.R."/>
        </authorList>
    </citation>
    <scope>PROTEIN SEQUENCE OF 61-94; 109-125; 130-153; 154-178; 245-270 AND 322-346</scope>
    <scope>SUBCELLULAR LOCATION</scope>
    <source>
        <tissue>Venom</tissue>
    </source>
</reference>
<reference key="3">
    <citation type="journal article" date="2005" name="J. Allergy Clin. Immunol.">
        <title>Sol i 1, the phospholipase allergen of imported fire ant venom.</title>
        <authorList>
            <person name="Hoffman D.R."/>
            <person name="Sakell R.H."/>
            <person name="Schmidt M."/>
        </authorList>
    </citation>
    <scope>PROTEIN SEQUENCE OF 38-94; 109-125; 135-138; 141-150; 155-178; 191-205; 244-266 AND 316-346</scope>
    <scope>FUNCTION</scope>
    <scope>SUBCELLULAR LOCATION</scope>
    <scope>GLYCOSYLATION</scope>
    <scope>ALLERGEN</scope>
    <source>
        <tissue>Venom</tissue>
    </source>
</reference>
<reference key="4">
    <citation type="journal article" date="2011" name="Proc. Natl. Acad. Sci. U.S.A.">
        <title>The genome of the fire ant Solenopsis invicta.</title>
        <authorList>
            <person name="Wurm Y."/>
            <person name="Wang J."/>
            <person name="Riba-Grognuz O."/>
            <person name="Corona M."/>
            <person name="Nygaard S."/>
            <person name="Hunt B.G."/>
            <person name="Ingram K.K."/>
            <person name="Falquet L."/>
            <person name="Nipitwattanaphon M."/>
            <person name="Gotzek D."/>
            <person name="Dijkstra M.B."/>
            <person name="Oettler J."/>
            <person name="Comtesse F."/>
            <person name="Shih C.J."/>
            <person name="Wu W.J."/>
            <person name="Yang C.C."/>
            <person name="Thomas J."/>
            <person name="Beaudoing E."/>
            <person name="Pradervand S."/>
            <person name="Flegel V."/>
            <person name="Cook E.D."/>
            <person name="Fabbretti R."/>
            <person name="Stockinger H."/>
            <person name="Long L."/>
            <person name="Farmerie W.G."/>
            <person name="Oakey J."/>
            <person name="Boomsma J.J."/>
            <person name="Pamilo P."/>
            <person name="Yi S.V."/>
            <person name="Heinze J."/>
            <person name="Goodisman M.A."/>
            <person name="Farinelli L."/>
            <person name="Harshman K."/>
            <person name="Hulo N."/>
            <person name="Cerutti L."/>
            <person name="Xenarios I."/>
            <person name="Shoemaker D."/>
            <person name="Keller L."/>
        </authorList>
    </citation>
    <scope>NUCLEOTIDE SEQUENCE [LARGE SCALE GENOMIC DNA] OF 145-281</scope>
</reference>
<reference key="5">
    <citation type="journal article" date="1988" name="J. Allergy Clin. Immunol.">
        <title>Allergens in Hymenoptera venom. XX. Isolation of four allergens from imported fire ant (Solenopsis invicta) venom.</title>
        <authorList>
            <person name="Hoffman D.R."/>
            <person name="Dove D.E."/>
            <person name="Jacobson R.S."/>
        </authorList>
    </citation>
    <scope>ISOLATION</scope>
    <scope>ALLERGEN</scope>
</reference>
<evidence type="ECO:0000250" key="1"/>
<evidence type="ECO:0000250" key="2">
    <source>
        <dbReference type="UniProtKB" id="A0A0M3KKW3"/>
    </source>
</evidence>
<evidence type="ECO:0000250" key="3">
    <source>
        <dbReference type="UniProtKB" id="P0DMB4"/>
    </source>
</evidence>
<evidence type="ECO:0000250" key="4">
    <source>
        <dbReference type="UniProtKB" id="P0DMB7"/>
    </source>
</evidence>
<evidence type="ECO:0000255" key="5"/>
<evidence type="ECO:0000255" key="6">
    <source>
        <dbReference type="PROSITE-ProRule" id="PRU10037"/>
    </source>
</evidence>
<evidence type="ECO:0000269" key="7">
    <source>
    </source>
</evidence>
<evidence type="ECO:0000269" key="8">
    <source>
    </source>
</evidence>
<evidence type="ECO:0000269" key="9">
    <source>
    </source>
</evidence>
<evidence type="ECO:0000303" key="10">
    <source>
    </source>
</evidence>
<evidence type="ECO:0000303" key="11">
    <source ref="1"/>
</evidence>
<evidence type="ECO:0000305" key="12"/>
<evidence type="ECO:0000305" key="13">
    <source>
    </source>
</evidence>
<evidence type="ECO:0000305" key="14">
    <source>
    </source>
</evidence>
<keyword id="KW-0020">Allergen</keyword>
<keyword id="KW-0204">Cytolysis</keyword>
<keyword id="KW-0903">Direct protein sequencing</keyword>
<keyword id="KW-1015">Disulfide bond</keyword>
<keyword id="KW-0325">Glycoprotein</keyword>
<keyword id="KW-0354">Hemolysis</keyword>
<keyword id="KW-0378">Hydrolase</keyword>
<keyword id="KW-0442">Lipid degradation</keyword>
<keyword id="KW-0443">Lipid metabolism</keyword>
<keyword id="KW-0964">Secreted</keyword>
<keyword id="KW-0732">Signal</keyword>
<feature type="signal peptide" evidence="5">
    <location>
        <begin position="1"/>
        <end position="26"/>
    </location>
</feature>
<feature type="propeptide" id="PRO_0000401922" evidence="13">
    <location>
        <begin position="27"/>
        <end position="37"/>
    </location>
</feature>
<feature type="chain" id="PRO_5000093784" description="Phospholipase A1" evidence="7">
    <location>
        <begin position="38"/>
        <end position="346"/>
    </location>
</feature>
<feature type="active site" description="Nucleophile" evidence="2">
    <location>
        <position position="167"/>
    </location>
</feature>
<feature type="active site" description="Charge relay system" evidence="6">
    <location>
        <position position="195"/>
    </location>
</feature>
<feature type="active site" description="Charge relay system" evidence="6">
    <location>
        <position position="258"/>
    </location>
</feature>
<feature type="glycosylation site" description="N-linked (GlcNAc...) asparagine" evidence="5">
    <location>
        <position position="44"/>
    </location>
</feature>
<feature type="glycosylation site" description="N-linked (GlcNAc...) asparagine" evidence="5">
    <location>
        <position position="72"/>
    </location>
</feature>
<feature type="glycosylation site" description="N-linked (GlcNAc...) asparagine" evidence="5">
    <location>
        <position position="185"/>
    </location>
</feature>
<feature type="sequence conflict" description="In Ref. 2; AA sequence." evidence="12" ref="2">
    <original>N</original>
    <variation>G</variation>
    <location>
        <position position="130"/>
    </location>
</feature>
<feature type="sequence conflict" description="In Ref. 2; AA sequence." evidence="12" ref="2">
    <original>A</original>
    <variation>S</variation>
    <location>
        <position position="133"/>
    </location>
</feature>
<feature type="sequence conflict" description="In Ref. 4; EFZ21865." evidence="12" ref="4">
    <original>K</original>
    <variation>R</variation>
    <location>
        <position position="145"/>
    </location>
</feature>
<feature type="sequence conflict" description="In Ref. 2; AA sequence." evidence="12" ref="2">
    <original>C</original>
    <variation>W</variation>
    <location>
        <position position="154"/>
    </location>
</feature>
<feature type="sequence conflict" description="In Ref. 2; AA sequence." evidence="12" ref="2">
    <original>C</original>
    <variation>S</variation>
    <location>
        <position position="173"/>
    </location>
</feature>
<feature type="sequence conflict" description="In Ref. 2; AA sequence." evidence="12" ref="2">
    <original>MV</original>
    <variation>VPS</variation>
    <location>
        <begin position="268"/>
        <end position="269"/>
    </location>
</feature>
<feature type="sequence conflict" description="In Ref. 2; AA sequence." evidence="12" ref="2">
    <original>C</original>
    <variation>G</variation>
    <location>
        <position position="343"/>
    </location>
</feature>
<feature type="sequence conflict" description="In Ref. 2; AA sequence." evidence="12" ref="2">
    <original>Q</original>
    <variation>QE</variation>
    <location>
        <position position="346"/>
    </location>
</feature>
<accession>Q68KK0</accession>
<accession>E9IC36</accession>
<accession>Q9TXF4</accession>
<dbReference type="EC" id="3.1.1.32" evidence="3"/>
<dbReference type="EMBL" id="AY684998">
    <property type="protein sequence ID" value="AAT95008.1"/>
    <property type="molecule type" value="mRNA"/>
</dbReference>
<dbReference type="EMBL" id="GL762181">
    <property type="protein sequence ID" value="EFZ21865.1"/>
    <property type="molecule type" value="Genomic_DNA"/>
</dbReference>
<dbReference type="RefSeq" id="NP_001291510.1">
    <property type="nucleotide sequence ID" value="NM_001304581.2"/>
</dbReference>
<dbReference type="RefSeq" id="XP_011173569.1">
    <property type="nucleotide sequence ID" value="XM_011175267.1"/>
</dbReference>
<dbReference type="SMR" id="Q68KK0"/>
<dbReference type="Allergome" id="3481">
    <property type="allergen name" value="Sol i 1.0101"/>
</dbReference>
<dbReference type="Allergome" id="630">
    <property type="allergen name" value="Sol i 1"/>
</dbReference>
<dbReference type="ESTHER" id="solin-q68kk0">
    <property type="family name" value="Insect_Phospholipase"/>
</dbReference>
<dbReference type="EnsemblMetazoa" id="NM_001304581.1">
    <property type="protein sequence ID" value="NP_001291510.1"/>
    <property type="gene ID" value="LOC105205761"/>
</dbReference>
<dbReference type="GeneID" id="105205761"/>
<dbReference type="KEGG" id="soc:105205761"/>
<dbReference type="HOGENOM" id="CLU_1870320_0_0_1"/>
<dbReference type="OrthoDB" id="8183961at2759"/>
<dbReference type="GO" id="GO:0005615">
    <property type="term" value="C:extracellular space"/>
    <property type="evidence" value="ECO:0007669"/>
    <property type="project" value="TreeGrafter"/>
</dbReference>
<dbReference type="GO" id="GO:0008970">
    <property type="term" value="F:phospholipase A1 activity"/>
    <property type="evidence" value="ECO:0007669"/>
    <property type="project" value="UniProtKB-EC"/>
</dbReference>
<dbReference type="GO" id="GO:0017171">
    <property type="term" value="F:serine hydrolase activity"/>
    <property type="evidence" value="ECO:0007669"/>
    <property type="project" value="TreeGrafter"/>
</dbReference>
<dbReference type="GO" id="GO:0031640">
    <property type="term" value="P:killing of cells of another organism"/>
    <property type="evidence" value="ECO:0007669"/>
    <property type="project" value="UniProtKB-KW"/>
</dbReference>
<dbReference type="GO" id="GO:0016042">
    <property type="term" value="P:lipid catabolic process"/>
    <property type="evidence" value="ECO:0007669"/>
    <property type="project" value="UniProtKB-KW"/>
</dbReference>
<dbReference type="Gene3D" id="3.40.50.1820">
    <property type="entry name" value="alpha/beta hydrolase"/>
    <property type="match status" value="1"/>
</dbReference>
<dbReference type="InterPro" id="IPR029058">
    <property type="entry name" value="AB_hydrolase_fold"/>
</dbReference>
<dbReference type="InterPro" id="IPR013818">
    <property type="entry name" value="Lipase"/>
</dbReference>
<dbReference type="InterPro" id="IPR000734">
    <property type="entry name" value="TAG_lipase"/>
</dbReference>
<dbReference type="PANTHER" id="PTHR11610">
    <property type="entry name" value="LIPASE"/>
    <property type="match status" value="1"/>
</dbReference>
<dbReference type="PANTHER" id="PTHR11610:SF173">
    <property type="entry name" value="LIPASE DOMAIN-CONTAINING PROTEIN-RELATED"/>
    <property type="match status" value="1"/>
</dbReference>
<dbReference type="Pfam" id="PF00151">
    <property type="entry name" value="Lipase"/>
    <property type="match status" value="1"/>
</dbReference>
<dbReference type="PRINTS" id="PR00821">
    <property type="entry name" value="TAGLIPASE"/>
</dbReference>
<dbReference type="SUPFAM" id="SSF53474">
    <property type="entry name" value="alpha/beta-Hydrolases"/>
    <property type="match status" value="1"/>
</dbReference>
<dbReference type="PROSITE" id="PS00120">
    <property type="entry name" value="LIPASE_SER"/>
    <property type="match status" value="1"/>
</dbReference>
<comment type="function">
    <text evidence="3 4">Catalyzes the hydrolysis of phosphatidylcholine with phospholipase A1 activity (By similarity). Induces hemolytic activity (By similarity). Acts as an allergen (PubMed:3192865).</text>
</comment>
<comment type="catalytic activity">
    <reaction evidence="3">
        <text>a 1,2-diacyl-sn-glycero-3-phosphocholine + H2O = a 2-acyl-sn-glycero-3-phosphocholine + a fatty acid + H(+)</text>
        <dbReference type="Rhea" id="RHEA:18689"/>
        <dbReference type="ChEBI" id="CHEBI:15377"/>
        <dbReference type="ChEBI" id="CHEBI:15378"/>
        <dbReference type="ChEBI" id="CHEBI:28868"/>
        <dbReference type="ChEBI" id="CHEBI:57643"/>
        <dbReference type="ChEBI" id="CHEBI:57875"/>
        <dbReference type="EC" id="3.1.1.32"/>
    </reaction>
</comment>
<comment type="subcellular location">
    <subcellularLocation>
        <location evidence="7 9">Secreted</location>
    </subcellularLocation>
</comment>
<comment type="tissue specificity">
    <text evidence="13 14">Expressed by the venom gland.</text>
</comment>
<comment type="PTM">
    <text evidence="1">Contains six disulfide bonds.</text>
</comment>
<comment type="PTM">
    <text evidence="7">N-glycosylated; contains mannose.</text>
</comment>
<comment type="allergen">
    <text evidence="7 8">Causes an allergic reaction in human (PubMed:3192865). It exhibits some cross-reactivity with IgE antibodies from patients sensitized to other Hymenoptera venoms (PubMed:15753912).</text>
</comment>
<comment type="similarity">
    <text evidence="12">Belongs to the AB hydrolase superfamily. Lipase family.</text>
</comment>
<sequence>MRKFAAIFVVFFVQCTHLYSLAQARAEPDPGVVEYLKQSCVYGNSSYINVYLYNSRFQGKNLGNQQSCQDINASLPVVFITHGFTSSAQVSTFKDLANAFVQKGHTAFIVDWSEAACTDGLPGVQFAEYNAAASNTYDIGQLMAKYTVDLMNKCKIPLNNIQYVGHSLGSHVCGFAAKHVKKLINKTMPYILALDPADPSFGSNKCGERICKSDAKRIVVFKTSILGIGENIIGHLLIVFDGGKSQPACSWYDVPCSHSESIVYATGMVSGRCQHLAVPWTAQQRINPIQWKFWRVFTSNIPAYPTSDTTNCVVLNTNVFKNDNTFEGEYHAFPDCARNLFKCRQQ</sequence>
<protein>
    <recommendedName>
        <fullName evidence="12">Phospholipase A1</fullName>
        <shortName evidence="12">PLA1</shortName>
        <ecNumber evidence="3">3.1.1.32</ecNumber>
    </recommendedName>
    <alternativeName>
        <fullName>Allergen Sol i I</fullName>
    </alternativeName>
    <alternativeName>
        <fullName>Venom allergen 1</fullName>
    </alternativeName>
    <alternativeName>
        <fullName>Venom allergen I</fullName>
    </alternativeName>
    <allergenName evidence="10 11">Sol i 1</allergenName>
</protein>
<organism>
    <name type="scientific">Solenopsis invicta</name>
    <name type="common">Red imported fire ant</name>
    <name type="synonym">Solenopsis wagneri</name>
    <dbReference type="NCBI Taxonomy" id="13686"/>
    <lineage>
        <taxon>Eukaryota</taxon>
        <taxon>Metazoa</taxon>
        <taxon>Ecdysozoa</taxon>
        <taxon>Arthropoda</taxon>
        <taxon>Hexapoda</taxon>
        <taxon>Insecta</taxon>
        <taxon>Pterygota</taxon>
        <taxon>Neoptera</taxon>
        <taxon>Endopterygota</taxon>
        <taxon>Hymenoptera</taxon>
        <taxon>Apocrita</taxon>
        <taxon>Aculeata</taxon>
        <taxon>Formicoidea</taxon>
        <taxon>Formicidae</taxon>
        <taxon>Myrmicinae</taxon>
        <taxon>Solenopsis</taxon>
    </lineage>
</organism>